<feature type="chain" id="PRO_1000053093" description="Large ribosomal subunit protein uL18">
    <location>
        <begin position="1"/>
        <end position="205"/>
    </location>
</feature>
<protein>
    <recommendedName>
        <fullName evidence="1">Large ribosomal subunit protein uL18</fullName>
    </recommendedName>
    <alternativeName>
        <fullName evidence="2">50S ribosomal protein L18</fullName>
    </alternativeName>
</protein>
<reference key="1">
    <citation type="submission" date="2006-12" db="EMBL/GenBank/DDBJ databases">
        <title>Complete sequence of Pyrobaculum islandicum DSM 4184.</title>
        <authorList>
            <person name="Copeland A."/>
            <person name="Lucas S."/>
            <person name="Lapidus A."/>
            <person name="Barry K."/>
            <person name="Detter J.C."/>
            <person name="Glavina del Rio T."/>
            <person name="Dalin E."/>
            <person name="Tice H."/>
            <person name="Pitluck S."/>
            <person name="Meincke L."/>
            <person name="Brettin T."/>
            <person name="Bruce D."/>
            <person name="Han C."/>
            <person name="Tapia R."/>
            <person name="Gilna P."/>
            <person name="Schmutz J."/>
            <person name="Larimer F."/>
            <person name="Land M."/>
            <person name="Hauser L."/>
            <person name="Kyrpides N."/>
            <person name="Mikhailova N."/>
            <person name="Cozen A.E."/>
            <person name="Fitz-Gibbon S.T."/>
            <person name="House C.H."/>
            <person name="Saltikov C."/>
            <person name="Lowe T."/>
            <person name="Richardson P."/>
        </authorList>
    </citation>
    <scope>NUCLEOTIDE SEQUENCE [LARGE SCALE GENOMIC DNA]</scope>
    <source>
        <strain>DSM 4184 / JCM 9189 / GEO3</strain>
    </source>
</reference>
<name>RL18_PYRIL</name>
<organism>
    <name type="scientific">Pyrobaculum islandicum (strain DSM 4184 / JCM 9189 / GEO3)</name>
    <dbReference type="NCBI Taxonomy" id="384616"/>
    <lineage>
        <taxon>Archaea</taxon>
        <taxon>Thermoproteota</taxon>
        <taxon>Thermoprotei</taxon>
        <taxon>Thermoproteales</taxon>
        <taxon>Thermoproteaceae</taxon>
        <taxon>Pyrobaculum</taxon>
    </lineage>
</organism>
<keyword id="KW-0687">Ribonucleoprotein</keyword>
<keyword id="KW-0689">Ribosomal protein</keyword>
<keyword id="KW-0694">RNA-binding</keyword>
<keyword id="KW-0699">rRNA-binding</keyword>
<accession>A1RVN4</accession>
<gene>
    <name evidence="1" type="primary">rpl18</name>
    <name type="ordered locus">Pisl_1868</name>
</gene>
<proteinExistence type="inferred from homology"/>
<sequence>MARGPRYKVPFRRRREGLTNYRKRRKLLLSKKPRLVVRKTNKHIIAQVVVAKPQGDVTIVGIDTRALAKFGWKGDENNTPAAYLLGLIVGYKARIRGVKEAVLDIGLHRPVAGSRVFAVLKGALDAGLEIPHGEEIIPSDDRISGKHIAEYAEKLKKENPELYKTRFSRYLQRGLAPEELPTHFEEVKKKIIEYYEGKLAKAIAQ</sequence>
<dbReference type="EMBL" id="CP000504">
    <property type="protein sequence ID" value="ABL89016.1"/>
    <property type="molecule type" value="Genomic_DNA"/>
</dbReference>
<dbReference type="RefSeq" id="WP_011763591.1">
    <property type="nucleotide sequence ID" value="NC_008701.1"/>
</dbReference>
<dbReference type="SMR" id="A1RVN4"/>
<dbReference type="STRING" id="384616.Pisl_1868"/>
<dbReference type="GeneID" id="4616433"/>
<dbReference type="KEGG" id="pis:Pisl_1868"/>
<dbReference type="eggNOG" id="arCOG04088">
    <property type="taxonomic scope" value="Archaea"/>
</dbReference>
<dbReference type="HOGENOM" id="CLU_056222_2_0_2"/>
<dbReference type="OrthoDB" id="8644at2157"/>
<dbReference type="Proteomes" id="UP000002595">
    <property type="component" value="Chromosome"/>
</dbReference>
<dbReference type="GO" id="GO:0022625">
    <property type="term" value="C:cytosolic large ribosomal subunit"/>
    <property type="evidence" value="ECO:0007669"/>
    <property type="project" value="TreeGrafter"/>
</dbReference>
<dbReference type="GO" id="GO:0008097">
    <property type="term" value="F:5S rRNA binding"/>
    <property type="evidence" value="ECO:0007669"/>
    <property type="project" value="InterPro"/>
</dbReference>
<dbReference type="GO" id="GO:0003735">
    <property type="term" value="F:structural constituent of ribosome"/>
    <property type="evidence" value="ECO:0007669"/>
    <property type="project" value="InterPro"/>
</dbReference>
<dbReference type="GO" id="GO:0000027">
    <property type="term" value="P:ribosomal large subunit assembly"/>
    <property type="evidence" value="ECO:0007669"/>
    <property type="project" value="TreeGrafter"/>
</dbReference>
<dbReference type="GO" id="GO:0006412">
    <property type="term" value="P:translation"/>
    <property type="evidence" value="ECO:0007669"/>
    <property type="project" value="UniProtKB-UniRule"/>
</dbReference>
<dbReference type="CDD" id="cd00432">
    <property type="entry name" value="Ribosomal_L18_L5e"/>
    <property type="match status" value="1"/>
</dbReference>
<dbReference type="FunFam" id="3.30.420.100:FF:000008">
    <property type="entry name" value="50S ribosomal protein L18"/>
    <property type="match status" value="1"/>
</dbReference>
<dbReference type="Gene3D" id="3.30.420.100">
    <property type="match status" value="1"/>
</dbReference>
<dbReference type="HAMAP" id="MF_01337_A">
    <property type="entry name" value="Ribosomal_uL18_A"/>
    <property type="match status" value="1"/>
</dbReference>
<dbReference type="InterPro" id="IPR005485">
    <property type="entry name" value="Rbsml_uL18_euk"/>
</dbReference>
<dbReference type="NCBIfam" id="NF006342">
    <property type="entry name" value="PRK08569.1"/>
    <property type="match status" value="1"/>
</dbReference>
<dbReference type="PANTHER" id="PTHR23410:SF12">
    <property type="entry name" value="LARGE RIBOSOMAL SUBUNIT PROTEIN UL18"/>
    <property type="match status" value="1"/>
</dbReference>
<dbReference type="PANTHER" id="PTHR23410">
    <property type="entry name" value="RIBOSOMAL PROTEIN L5-RELATED"/>
    <property type="match status" value="1"/>
</dbReference>
<dbReference type="Pfam" id="PF17144">
    <property type="entry name" value="Ribosomal_L5e"/>
    <property type="match status" value="2"/>
</dbReference>
<dbReference type="SUPFAM" id="SSF53137">
    <property type="entry name" value="Translational machinery components"/>
    <property type="match status" value="1"/>
</dbReference>
<comment type="function">
    <text evidence="1">This is one of the proteins that bind and probably mediate the attachment of the 5S RNA into the large ribosomal subunit, where it forms part of the central protuberance.</text>
</comment>
<comment type="subunit">
    <text evidence="1">Part of the 50S ribosomal subunit. Contacts the 5S and 23S rRNAs.</text>
</comment>
<comment type="similarity">
    <text evidence="1">Belongs to the universal ribosomal protein uL18 family.</text>
</comment>
<evidence type="ECO:0000255" key="1">
    <source>
        <dbReference type="HAMAP-Rule" id="MF_01337"/>
    </source>
</evidence>
<evidence type="ECO:0000305" key="2"/>